<feature type="chain" id="PRO_0000297689" description="Linear element protein rec25">
    <location>
        <begin position="1"/>
        <end position="150"/>
    </location>
</feature>
<feature type="modified residue" description="Phosphoserine" evidence="3">
    <location>
        <position position="11"/>
    </location>
</feature>
<feature type="mutagenesis site" description="Decreases meiotic gene conversion at ade6, and crossing-over between ade6 and arg1; when associated with P-137." evidence="5">
    <original>N</original>
    <variation>D</variation>
    <location>
        <position position="36"/>
    </location>
</feature>
<feature type="mutagenesis site" description="Decreases meiotic gene conversion at ade6, crossing-over between ade6 and arg1, and abolishes double-strand break (DSB) formation at a DSB hotspot." evidence="5">
    <original>N</original>
    <variation>I</variation>
    <location>
        <position position="63"/>
    </location>
</feature>
<feature type="mutagenesis site" description="Decreases meiotic gene conversion at ade6, and crossing-over between ade6 and arg1." evidence="5">
    <original>L</original>
    <variation>P</variation>
    <location>
        <position position="90"/>
    </location>
</feature>
<feature type="mutagenesis site" description="Decreases meiotic gene conversion at ade6, and crossing-over between ade6 and arg1." evidence="5">
    <original>K</original>
    <variation>I</variation>
    <location>
        <position position="124"/>
    </location>
</feature>
<feature type="mutagenesis site" description="Decreases meiotic gene conversion at ade6, and crossing-over between ade6 and arg1; when associated with D-36." evidence="5">
    <original>L</original>
    <variation>P</variation>
    <location>
        <position position="137"/>
    </location>
</feature>
<comment type="function">
    <text evidence="1 4">During meiotic DNA recombination, binds to and may help activate DNA double-strand break (DSB) hotspot sites.</text>
</comment>
<comment type="subunit">
    <text evidence="4 6">Component of linear elements (LinEs), which are similar to synaptonemal complexes, at least composed of rec27, rec25, rec10 and mug20 (PubMed:23395004). Interacts with rec10; the interaction is direct (PubMed:31665745).</text>
</comment>
<comment type="subcellular location">
    <subcellularLocation>
        <location evidence="2">Cytoplasm</location>
    </subcellularLocation>
    <subcellularLocation>
        <location evidence="2 4 5 7">Nucleus</location>
    </subcellularLocation>
    <subcellularLocation>
        <location evidence="4">Chromosome</location>
    </subcellularLocation>
    <text evidence="4">Localizes to chromosomal double-strand break (DSB) hotspot sites during the meiotic cell cycle.</text>
</comment>
<comment type="developmental stage">
    <text evidence="7">Present from pre-meiotic DNA replication and disappears following meiotic prophase I.</text>
</comment>
<comment type="disruption phenotype">
    <text evidence="4 7">Abnormal linear element formation (PubMed:23395004, PubMed:33825974). Abnormal sporulation (PubMed:33825974).</text>
</comment>
<protein>
    <recommendedName>
        <fullName evidence="8">Linear element protein rec25</fullName>
    </recommendedName>
    <alternativeName>
        <fullName>Meiotic recombination protein rec25</fullName>
    </alternativeName>
    <alternativeName>
        <fullName>Meiotically up-regulated gene 19 protein</fullName>
    </alternativeName>
</protein>
<gene>
    <name evidence="9" type="primary">rec25</name>
    <name evidence="9" type="synonym">mug19</name>
    <name evidence="9" type="ORF">SPAC17A5.18c</name>
</gene>
<keyword id="KW-0158">Chromosome</keyword>
<keyword id="KW-0159">Chromosome partition</keyword>
<keyword id="KW-0963">Cytoplasm</keyword>
<keyword id="KW-0469">Meiosis</keyword>
<keyword id="KW-0539">Nucleus</keyword>
<keyword id="KW-0597">Phosphoprotein</keyword>
<keyword id="KW-1185">Reference proteome</keyword>
<proteinExistence type="evidence at protein level"/>
<dbReference type="EMBL" id="CU329670">
    <property type="protein sequence ID" value="CAC34941.1"/>
    <property type="molecule type" value="Genomic_DNA"/>
</dbReference>
<dbReference type="RefSeq" id="NP_593469.1">
    <property type="nucleotide sequence ID" value="NM_001018902.2"/>
</dbReference>
<dbReference type="SMR" id="Q9C115"/>
<dbReference type="BioGRID" id="278853">
    <property type="interactions" value="5"/>
</dbReference>
<dbReference type="STRING" id="284812.Q9C115"/>
<dbReference type="iPTMnet" id="Q9C115"/>
<dbReference type="PaxDb" id="4896-SPAC17A5.18c.1"/>
<dbReference type="EnsemblFungi" id="SPAC17A5.18c.1">
    <property type="protein sequence ID" value="SPAC17A5.18c.1:pep"/>
    <property type="gene ID" value="SPAC17A5.18c"/>
</dbReference>
<dbReference type="GeneID" id="2542389"/>
<dbReference type="KEGG" id="spo:2542389"/>
<dbReference type="PomBase" id="SPAC17A5.18c">
    <property type="gene designation" value="rec25"/>
</dbReference>
<dbReference type="VEuPathDB" id="FungiDB:SPAC17A5.18c"/>
<dbReference type="HOGENOM" id="CLU_1741641_0_0_1"/>
<dbReference type="InParanoid" id="Q9C115"/>
<dbReference type="OMA" id="LMCMESD"/>
<dbReference type="PRO" id="PR:Q9C115"/>
<dbReference type="Proteomes" id="UP000002485">
    <property type="component" value="Chromosome I"/>
</dbReference>
<dbReference type="GO" id="GO:0000785">
    <property type="term" value="C:chromatin"/>
    <property type="evidence" value="ECO:0000314"/>
    <property type="project" value="PomBase"/>
</dbReference>
<dbReference type="GO" id="GO:0005829">
    <property type="term" value="C:cytosol"/>
    <property type="evidence" value="ECO:0007005"/>
    <property type="project" value="PomBase"/>
</dbReference>
<dbReference type="GO" id="GO:0030998">
    <property type="term" value="C:linear element"/>
    <property type="evidence" value="ECO:0000314"/>
    <property type="project" value="PomBase"/>
</dbReference>
<dbReference type="GO" id="GO:0005634">
    <property type="term" value="C:nucleus"/>
    <property type="evidence" value="ECO:0000314"/>
    <property type="project" value="UniProtKB"/>
</dbReference>
<dbReference type="GO" id="GO:0007059">
    <property type="term" value="P:chromosome segregation"/>
    <property type="evidence" value="ECO:0007669"/>
    <property type="project" value="UniProtKB-KW"/>
</dbReference>
<dbReference type="GO" id="GO:0010780">
    <property type="term" value="P:meiotic DNA double-strand break formation involved in reciprocal meiotic recombination"/>
    <property type="evidence" value="ECO:0000269"/>
    <property type="project" value="PomBase"/>
</dbReference>
<dbReference type="GO" id="GO:0007131">
    <property type="term" value="P:reciprocal meiotic recombination"/>
    <property type="evidence" value="ECO:0000315"/>
    <property type="project" value="PomBase"/>
</dbReference>
<name>REC25_SCHPO</name>
<sequence length="150" mass="17096">MVKGSVTNTSSIVKQFEKSSIKHETETIAFAKQFINECIREFQEQKDNVVEEKNTDQNHQNQNQEGVIIEIYQELLQKVDLISSELRQNLSSLQLRFQEVERDTGHDLLNVLNSLSQEARLAQKVLEEDGSQQGSQLIQGLLTCFQSTGN</sequence>
<reference key="1">
    <citation type="journal article" date="2002" name="Nature">
        <title>The genome sequence of Schizosaccharomyces pombe.</title>
        <authorList>
            <person name="Wood V."/>
            <person name="Gwilliam R."/>
            <person name="Rajandream M.A."/>
            <person name="Lyne M.H."/>
            <person name="Lyne R."/>
            <person name="Stewart A."/>
            <person name="Sgouros J.G."/>
            <person name="Peat N."/>
            <person name="Hayles J."/>
            <person name="Baker S.G."/>
            <person name="Basham D."/>
            <person name="Bowman S."/>
            <person name="Brooks K."/>
            <person name="Brown D."/>
            <person name="Brown S."/>
            <person name="Chillingworth T."/>
            <person name="Churcher C.M."/>
            <person name="Collins M."/>
            <person name="Connor R."/>
            <person name="Cronin A."/>
            <person name="Davis P."/>
            <person name="Feltwell T."/>
            <person name="Fraser A."/>
            <person name="Gentles S."/>
            <person name="Goble A."/>
            <person name="Hamlin N."/>
            <person name="Harris D.E."/>
            <person name="Hidalgo J."/>
            <person name="Hodgson G."/>
            <person name="Holroyd S."/>
            <person name="Hornsby T."/>
            <person name="Howarth S."/>
            <person name="Huckle E.J."/>
            <person name="Hunt S."/>
            <person name="Jagels K."/>
            <person name="James K.D."/>
            <person name="Jones L."/>
            <person name="Jones M."/>
            <person name="Leather S."/>
            <person name="McDonald S."/>
            <person name="McLean J."/>
            <person name="Mooney P."/>
            <person name="Moule S."/>
            <person name="Mungall K.L."/>
            <person name="Murphy L.D."/>
            <person name="Niblett D."/>
            <person name="Odell C."/>
            <person name="Oliver K."/>
            <person name="O'Neil S."/>
            <person name="Pearson D."/>
            <person name="Quail M.A."/>
            <person name="Rabbinowitsch E."/>
            <person name="Rutherford K.M."/>
            <person name="Rutter S."/>
            <person name="Saunders D."/>
            <person name="Seeger K."/>
            <person name="Sharp S."/>
            <person name="Skelton J."/>
            <person name="Simmonds M.N."/>
            <person name="Squares R."/>
            <person name="Squares S."/>
            <person name="Stevens K."/>
            <person name="Taylor K."/>
            <person name="Taylor R.G."/>
            <person name="Tivey A."/>
            <person name="Walsh S.V."/>
            <person name="Warren T."/>
            <person name="Whitehead S."/>
            <person name="Woodward J.R."/>
            <person name="Volckaert G."/>
            <person name="Aert R."/>
            <person name="Robben J."/>
            <person name="Grymonprez B."/>
            <person name="Weltjens I."/>
            <person name="Vanstreels E."/>
            <person name="Rieger M."/>
            <person name="Schaefer M."/>
            <person name="Mueller-Auer S."/>
            <person name="Gabel C."/>
            <person name="Fuchs M."/>
            <person name="Duesterhoeft A."/>
            <person name="Fritzc C."/>
            <person name="Holzer E."/>
            <person name="Moestl D."/>
            <person name="Hilbert H."/>
            <person name="Borzym K."/>
            <person name="Langer I."/>
            <person name="Beck A."/>
            <person name="Lehrach H."/>
            <person name="Reinhardt R."/>
            <person name="Pohl T.M."/>
            <person name="Eger P."/>
            <person name="Zimmermann W."/>
            <person name="Wedler H."/>
            <person name="Wambutt R."/>
            <person name="Purnelle B."/>
            <person name="Goffeau A."/>
            <person name="Cadieu E."/>
            <person name="Dreano S."/>
            <person name="Gloux S."/>
            <person name="Lelaure V."/>
            <person name="Mottier S."/>
            <person name="Galibert F."/>
            <person name="Aves S.J."/>
            <person name="Xiang Z."/>
            <person name="Hunt C."/>
            <person name="Moore K."/>
            <person name="Hurst S.M."/>
            <person name="Lucas M."/>
            <person name="Rochet M."/>
            <person name="Gaillardin C."/>
            <person name="Tallada V.A."/>
            <person name="Garzon A."/>
            <person name="Thode G."/>
            <person name="Daga R.R."/>
            <person name="Cruzado L."/>
            <person name="Jimenez J."/>
            <person name="Sanchez M."/>
            <person name="del Rey F."/>
            <person name="Benito J."/>
            <person name="Dominguez A."/>
            <person name="Revuelta J.L."/>
            <person name="Moreno S."/>
            <person name="Armstrong J."/>
            <person name="Forsburg S.L."/>
            <person name="Cerutti L."/>
            <person name="Lowe T."/>
            <person name="McCombie W.R."/>
            <person name="Paulsen I."/>
            <person name="Potashkin J."/>
            <person name="Shpakovski G.V."/>
            <person name="Ussery D."/>
            <person name="Barrell B.G."/>
            <person name="Nurse P."/>
        </authorList>
    </citation>
    <scope>NUCLEOTIDE SEQUENCE [LARGE SCALE GENOMIC DNA]</scope>
    <source>
        <strain>972 / ATCC 24843</strain>
    </source>
</reference>
<reference key="2">
    <citation type="journal article" date="2005" name="Curr. Biol.">
        <title>A large-scale screen in S. pombe identifies seven novel genes required for critical meiotic events.</title>
        <authorList>
            <person name="Martin-Castellanos C."/>
            <person name="Blanco M."/>
            <person name="Rozalen A.E."/>
            <person name="Perez-Hidalgo L."/>
            <person name="Garcia A.I."/>
            <person name="Conde F."/>
            <person name="Mata J."/>
            <person name="Ellermeier C."/>
            <person name="Davis L."/>
            <person name="San-Segundo P."/>
            <person name="Smith G.R."/>
            <person name="Moreno S."/>
        </authorList>
    </citation>
    <scope>FUNCTION IN MEIOSIS</scope>
</reference>
<reference key="3">
    <citation type="journal article" date="2006" name="Nat. Biotechnol.">
        <title>ORFeome cloning and global analysis of protein localization in the fission yeast Schizosaccharomyces pombe.</title>
        <authorList>
            <person name="Matsuyama A."/>
            <person name="Arai R."/>
            <person name="Yashiroda Y."/>
            <person name="Shirai A."/>
            <person name="Kamata A."/>
            <person name="Sekido S."/>
            <person name="Kobayashi Y."/>
            <person name="Hashimoto A."/>
            <person name="Hamamoto M."/>
            <person name="Hiraoka Y."/>
            <person name="Horinouchi S."/>
            <person name="Yoshida M."/>
        </authorList>
    </citation>
    <scope>SUBCELLULAR LOCATION [LARGE SCALE ANALYSIS]</scope>
</reference>
<reference key="4">
    <citation type="journal article" date="2008" name="J. Proteome Res.">
        <title>Phosphoproteome analysis of fission yeast.</title>
        <authorList>
            <person name="Wilson-Grady J.T."/>
            <person name="Villen J."/>
            <person name="Gygi S.P."/>
        </authorList>
    </citation>
    <scope>PHOSPHORYLATION [LARGE SCALE ANALYSIS] AT SER-11</scope>
    <scope>IDENTIFICATION BY MASS SPECTROMETRY</scope>
</reference>
<reference key="5">
    <citation type="journal article" date="2013" name="Mol. Cell">
        <title>Protein determinants of meiotic DNA break hot spots.</title>
        <authorList>
            <person name="Fowler K.R."/>
            <person name="Gutierrez-Velasco S."/>
            <person name="Martin-Castellanos C."/>
            <person name="Smith G.R."/>
        </authorList>
    </citation>
    <scope>FUNCTION</scope>
    <scope>IDENTIFICATION IN THE LINEAR ELEMENT COMPLEX</scope>
    <scope>SUBCELLULAR LOCATION</scope>
    <scope>DISRUPTION PHENOTYPE</scope>
</reference>
<reference key="6">
    <citation type="journal article" date="2017" name="Sci. Rep.">
        <title>Functional organization of protein determinants of meiotic DNA break hotspots.</title>
        <authorList>
            <person name="Ma L."/>
            <person name="Fowler K.R."/>
            <person name="Martin-Castellanos C."/>
            <person name="Smith G.R."/>
        </authorList>
    </citation>
    <scope>SUBCELLULAR LOCATION</scope>
    <scope>MUTAGENESIS OF ASN-36; ASN-63; LEU-90; LYS-124 AND LEU-137</scope>
</reference>
<reference key="7">
    <citation type="journal article" date="2019" name="Nucleic Acids Res.">
        <title>Conserved HORMA domain-containing protein Hop1 stabilizes interaction between proteins of meiotic DNA break hotspots and chromosome axis.</title>
        <authorList>
            <person name="Kariyazono R."/>
            <person name="Oda A."/>
            <person name="Yamada T."/>
            <person name="Ohta K."/>
        </authorList>
    </citation>
    <scope>INTERACTION WITH REC10</scope>
</reference>
<reference key="8">
    <citation type="journal article" date="2021" name="Chromosoma">
        <title>Linear elements are stable structures along the chromosome axis in fission yeast meiosis.</title>
        <authorList>
            <person name="Ding D.Q."/>
            <person name="Matsuda A."/>
            <person name="Okamasa K."/>
            <person name="Hiraoka Y."/>
        </authorList>
    </citation>
    <scope>SUBCELLULAR LOCATION</scope>
    <scope>DEVELOPMENTAL STAGE</scope>
    <scope>DISRUPTION PHENOTYPE</scope>
</reference>
<evidence type="ECO:0000269" key="1">
    <source>
    </source>
</evidence>
<evidence type="ECO:0000269" key="2">
    <source>
    </source>
</evidence>
<evidence type="ECO:0000269" key="3">
    <source>
    </source>
</evidence>
<evidence type="ECO:0000269" key="4">
    <source>
    </source>
</evidence>
<evidence type="ECO:0000269" key="5">
    <source>
    </source>
</evidence>
<evidence type="ECO:0000269" key="6">
    <source>
    </source>
</evidence>
<evidence type="ECO:0000269" key="7">
    <source>
    </source>
</evidence>
<evidence type="ECO:0000305" key="8"/>
<evidence type="ECO:0000312" key="9">
    <source>
        <dbReference type="PomBase" id="SPAC17A5.18c"/>
    </source>
</evidence>
<organism>
    <name type="scientific">Schizosaccharomyces pombe (strain 972 / ATCC 24843)</name>
    <name type="common">Fission yeast</name>
    <dbReference type="NCBI Taxonomy" id="284812"/>
    <lineage>
        <taxon>Eukaryota</taxon>
        <taxon>Fungi</taxon>
        <taxon>Dikarya</taxon>
        <taxon>Ascomycota</taxon>
        <taxon>Taphrinomycotina</taxon>
        <taxon>Schizosaccharomycetes</taxon>
        <taxon>Schizosaccharomycetales</taxon>
        <taxon>Schizosaccharomycetaceae</taxon>
        <taxon>Schizosaccharomyces</taxon>
    </lineage>
</organism>
<accession>Q9C115</accession>